<protein>
    <recommendedName>
        <fullName evidence="1">Small ribosomal subunit protein bS18</fullName>
    </recommendedName>
    <alternativeName>
        <fullName evidence="2">30S ribosomal protein S18</fullName>
    </alternativeName>
</protein>
<reference key="1">
    <citation type="journal article" date="2003" name="Proc. Natl. Acad. Sci. U.S.A.">
        <title>Genome sequence of the cyanobacterium Prochlorococcus marinus SS120, a nearly minimal oxyphototrophic genome.</title>
        <authorList>
            <person name="Dufresne A."/>
            <person name="Salanoubat M."/>
            <person name="Partensky F."/>
            <person name="Artiguenave F."/>
            <person name="Axmann I.M."/>
            <person name="Barbe V."/>
            <person name="Duprat S."/>
            <person name="Galperin M.Y."/>
            <person name="Koonin E.V."/>
            <person name="Le Gall F."/>
            <person name="Makarova K.S."/>
            <person name="Ostrowski M."/>
            <person name="Oztas S."/>
            <person name="Robert C."/>
            <person name="Rogozin I.B."/>
            <person name="Scanlan D.J."/>
            <person name="Tandeau de Marsac N."/>
            <person name="Weissenbach J."/>
            <person name="Wincker P."/>
            <person name="Wolf Y.I."/>
            <person name="Hess W.R."/>
        </authorList>
    </citation>
    <scope>NUCLEOTIDE SEQUENCE [LARGE SCALE GENOMIC DNA]</scope>
    <source>
        <strain>SARG / CCMP1375 / SS120</strain>
    </source>
</reference>
<name>RS18_PROMA</name>
<organism>
    <name type="scientific">Prochlorococcus marinus (strain SARG / CCMP1375 / SS120)</name>
    <dbReference type="NCBI Taxonomy" id="167539"/>
    <lineage>
        <taxon>Bacteria</taxon>
        <taxon>Bacillati</taxon>
        <taxon>Cyanobacteriota</taxon>
        <taxon>Cyanophyceae</taxon>
        <taxon>Synechococcales</taxon>
        <taxon>Prochlorococcaceae</taxon>
        <taxon>Prochlorococcus</taxon>
    </lineage>
</organism>
<keyword id="KW-1185">Reference proteome</keyword>
<keyword id="KW-0687">Ribonucleoprotein</keyword>
<keyword id="KW-0689">Ribosomal protein</keyword>
<keyword id="KW-0694">RNA-binding</keyword>
<keyword id="KW-0699">rRNA-binding</keyword>
<comment type="function">
    <text evidence="1">Binds as a heterodimer with protein bS6 to the central domain of the 16S rRNA, where it helps stabilize the platform of the 30S subunit.</text>
</comment>
<comment type="subunit">
    <text evidence="1">Part of the 30S ribosomal subunit. Forms a tight heterodimer with protein bS6.</text>
</comment>
<comment type="similarity">
    <text evidence="1">Belongs to the bacterial ribosomal protein bS18 family.</text>
</comment>
<proteinExistence type="inferred from homology"/>
<sequence>MPNSLFKKKLSPIKPGDPIDYKDVETLKKFITERGKILPRRLTGLTAKQQRDLTTAVKRARIIALLPFVNPEG</sequence>
<evidence type="ECO:0000255" key="1">
    <source>
        <dbReference type="HAMAP-Rule" id="MF_00270"/>
    </source>
</evidence>
<evidence type="ECO:0000305" key="2"/>
<dbReference type="EMBL" id="AE017126">
    <property type="protein sequence ID" value="AAQ00013.1"/>
    <property type="molecule type" value="Genomic_DNA"/>
</dbReference>
<dbReference type="RefSeq" id="NP_875360.1">
    <property type="nucleotide sequence ID" value="NC_005042.1"/>
</dbReference>
<dbReference type="RefSeq" id="WP_011125120.1">
    <property type="nucleotide sequence ID" value="NC_005042.1"/>
</dbReference>
<dbReference type="SMR" id="Q7VBX4"/>
<dbReference type="STRING" id="167539.Pro_0968"/>
<dbReference type="EnsemblBacteria" id="AAQ00013">
    <property type="protein sequence ID" value="AAQ00013"/>
    <property type="gene ID" value="Pro_0968"/>
</dbReference>
<dbReference type="KEGG" id="pma:Pro_0968"/>
<dbReference type="PATRIC" id="fig|167539.5.peg.1016"/>
<dbReference type="eggNOG" id="COG0238">
    <property type="taxonomic scope" value="Bacteria"/>
</dbReference>
<dbReference type="HOGENOM" id="CLU_148710_2_3_3"/>
<dbReference type="OrthoDB" id="9812008at2"/>
<dbReference type="Proteomes" id="UP000001420">
    <property type="component" value="Chromosome"/>
</dbReference>
<dbReference type="GO" id="GO:0022627">
    <property type="term" value="C:cytosolic small ribosomal subunit"/>
    <property type="evidence" value="ECO:0007669"/>
    <property type="project" value="TreeGrafter"/>
</dbReference>
<dbReference type="GO" id="GO:0070181">
    <property type="term" value="F:small ribosomal subunit rRNA binding"/>
    <property type="evidence" value="ECO:0007669"/>
    <property type="project" value="TreeGrafter"/>
</dbReference>
<dbReference type="GO" id="GO:0003735">
    <property type="term" value="F:structural constituent of ribosome"/>
    <property type="evidence" value="ECO:0007669"/>
    <property type="project" value="InterPro"/>
</dbReference>
<dbReference type="GO" id="GO:0006412">
    <property type="term" value="P:translation"/>
    <property type="evidence" value="ECO:0007669"/>
    <property type="project" value="UniProtKB-UniRule"/>
</dbReference>
<dbReference type="FunFam" id="4.10.640.10:FF:000002">
    <property type="entry name" value="30S ribosomal protein S18, chloroplastic"/>
    <property type="match status" value="1"/>
</dbReference>
<dbReference type="Gene3D" id="4.10.640.10">
    <property type="entry name" value="Ribosomal protein S18"/>
    <property type="match status" value="1"/>
</dbReference>
<dbReference type="HAMAP" id="MF_00270">
    <property type="entry name" value="Ribosomal_bS18"/>
    <property type="match status" value="1"/>
</dbReference>
<dbReference type="InterPro" id="IPR001648">
    <property type="entry name" value="Ribosomal_bS18"/>
</dbReference>
<dbReference type="InterPro" id="IPR018275">
    <property type="entry name" value="Ribosomal_bS18_CS"/>
</dbReference>
<dbReference type="InterPro" id="IPR036870">
    <property type="entry name" value="Ribosomal_bS18_sf"/>
</dbReference>
<dbReference type="NCBIfam" id="TIGR00165">
    <property type="entry name" value="S18"/>
    <property type="match status" value="1"/>
</dbReference>
<dbReference type="PANTHER" id="PTHR13479">
    <property type="entry name" value="30S RIBOSOMAL PROTEIN S18"/>
    <property type="match status" value="1"/>
</dbReference>
<dbReference type="PANTHER" id="PTHR13479:SF40">
    <property type="entry name" value="SMALL RIBOSOMAL SUBUNIT PROTEIN BS18M"/>
    <property type="match status" value="1"/>
</dbReference>
<dbReference type="Pfam" id="PF01084">
    <property type="entry name" value="Ribosomal_S18"/>
    <property type="match status" value="1"/>
</dbReference>
<dbReference type="PRINTS" id="PR00974">
    <property type="entry name" value="RIBOSOMALS18"/>
</dbReference>
<dbReference type="SUPFAM" id="SSF46911">
    <property type="entry name" value="Ribosomal protein S18"/>
    <property type="match status" value="1"/>
</dbReference>
<dbReference type="PROSITE" id="PS00057">
    <property type="entry name" value="RIBOSOMAL_S18"/>
    <property type="match status" value="1"/>
</dbReference>
<gene>
    <name evidence="1" type="primary">rpsR</name>
    <name evidence="1" type="synonym">rps18</name>
    <name type="ordered locus">Pro_0968</name>
</gene>
<accession>Q7VBX4</accession>
<feature type="chain" id="PRO_0000111206" description="Small ribosomal subunit protein bS18">
    <location>
        <begin position="1"/>
        <end position="73"/>
    </location>
</feature>